<feature type="chain" id="PRO_1000121522" description="Small ribosomal subunit protein eS27">
    <location>
        <begin position="1"/>
        <end position="65"/>
    </location>
</feature>
<feature type="zinc finger region" description="C4-type" evidence="1">
    <location>
        <begin position="20"/>
        <end position="42"/>
    </location>
</feature>
<feature type="binding site" evidence="1">
    <location>
        <position position="20"/>
    </location>
    <ligand>
        <name>Zn(2+)</name>
        <dbReference type="ChEBI" id="CHEBI:29105"/>
    </ligand>
</feature>
<feature type="binding site" evidence="1">
    <location>
        <position position="23"/>
    </location>
    <ligand>
        <name>Zn(2+)</name>
        <dbReference type="ChEBI" id="CHEBI:29105"/>
    </ligand>
</feature>
<feature type="binding site" evidence="1">
    <location>
        <position position="39"/>
    </location>
    <ligand>
        <name>Zn(2+)</name>
        <dbReference type="ChEBI" id="CHEBI:29105"/>
    </ligand>
</feature>
<feature type="binding site" evidence="1">
    <location>
        <position position="42"/>
    </location>
    <ligand>
        <name>Zn(2+)</name>
        <dbReference type="ChEBI" id="CHEBI:29105"/>
    </ligand>
</feature>
<protein>
    <recommendedName>
        <fullName evidence="1">Small ribosomal subunit protein eS27</fullName>
    </recommendedName>
    <alternativeName>
        <fullName evidence="2">30S ribosomal protein S27e</fullName>
    </alternativeName>
</protein>
<accession>B6YT34</accession>
<evidence type="ECO:0000255" key="1">
    <source>
        <dbReference type="HAMAP-Rule" id="MF_00371"/>
    </source>
</evidence>
<evidence type="ECO:0000305" key="2"/>
<gene>
    <name evidence="1" type="primary">rps27e</name>
    <name type="ordered locus">TON_0236</name>
</gene>
<organism>
    <name type="scientific">Thermococcus onnurineus (strain NA1)</name>
    <dbReference type="NCBI Taxonomy" id="523850"/>
    <lineage>
        <taxon>Archaea</taxon>
        <taxon>Methanobacteriati</taxon>
        <taxon>Methanobacteriota</taxon>
        <taxon>Thermococci</taxon>
        <taxon>Thermococcales</taxon>
        <taxon>Thermococcaceae</taxon>
        <taxon>Thermococcus</taxon>
    </lineage>
</organism>
<proteinExistence type="inferred from homology"/>
<name>RS27_THEON</name>
<sequence>MALPKNLIPMPRSRFLRVKCIDCGNEQIVFSNPATTVRCLVCGATLVEPTGGKGVIKAKILEVLE</sequence>
<dbReference type="EMBL" id="CP000855">
    <property type="protein sequence ID" value="ACJ15721.1"/>
    <property type="molecule type" value="Genomic_DNA"/>
</dbReference>
<dbReference type="RefSeq" id="WP_012571194.1">
    <property type="nucleotide sequence ID" value="NC_011529.1"/>
</dbReference>
<dbReference type="SMR" id="B6YT34"/>
<dbReference type="STRING" id="523850.TON_0236"/>
<dbReference type="KEGG" id="ton:TON_0236"/>
<dbReference type="PATRIC" id="fig|523850.10.peg.238"/>
<dbReference type="eggNOG" id="arCOG04108">
    <property type="taxonomic scope" value="Archaea"/>
</dbReference>
<dbReference type="HOGENOM" id="CLU_199465_0_0_2"/>
<dbReference type="OrthoDB" id="5718at2157"/>
<dbReference type="Proteomes" id="UP000002727">
    <property type="component" value="Chromosome"/>
</dbReference>
<dbReference type="GO" id="GO:1990904">
    <property type="term" value="C:ribonucleoprotein complex"/>
    <property type="evidence" value="ECO:0007669"/>
    <property type="project" value="UniProtKB-KW"/>
</dbReference>
<dbReference type="GO" id="GO:0005840">
    <property type="term" value="C:ribosome"/>
    <property type="evidence" value="ECO:0007669"/>
    <property type="project" value="UniProtKB-KW"/>
</dbReference>
<dbReference type="GO" id="GO:0003735">
    <property type="term" value="F:structural constituent of ribosome"/>
    <property type="evidence" value="ECO:0007669"/>
    <property type="project" value="InterPro"/>
</dbReference>
<dbReference type="GO" id="GO:0008270">
    <property type="term" value="F:zinc ion binding"/>
    <property type="evidence" value="ECO:0007669"/>
    <property type="project" value="UniProtKB-UniRule"/>
</dbReference>
<dbReference type="GO" id="GO:0006412">
    <property type="term" value="P:translation"/>
    <property type="evidence" value="ECO:0007669"/>
    <property type="project" value="UniProtKB-UniRule"/>
</dbReference>
<dbReference type="FunFam" id="2.20.25.100:FF:000002">
    <property type="entry name" value="30S ribosomal protein S27e"/>
    <property type="match status" value="1"/>
</dbReference>
<dbReference type="Gene3D" id="2.20.25.100">
    <property type="entry name" value="Zn-binding ribosomal proteins"/>
    <property type="match status" value="1"/>
</dbReference>
<dbReference type="HAMAP" id="MF_00371">
    <property type="entry name" value="Ribosomal_eS27"/>
    <property type="match status" value="1"/>
</dbReference>
<dbReference type="InterPro" id="IPR000592">
    <property type="entry name" value="Ribosomal_eS27"/>
</dbReference>
<dbReference type="InterPro" id="IPR023407">
    <property type="entry name" value="Ribosomal_eS27_Zn-bd_dom_sf"/>
</dbReference>
<dbReference type="InterPro" id="IPR011332">
    <property type="entry name" value="Ribosomal_zn-bd"/>
</dbReference>
<dbReference type="NCBIfam" id="NF001629">
    <property type="entry name" value="PRK00415.1"/>
    <property type="match status" value="1"/>
</dbReference>
<dbReference type="Pfam" id="PF01667">
    <property type="entry name" value="Ribosomal_S27e"/>
    <property type="match status" value="1"/>
</dbReference>
<dbReference type="SUPFAM" id="SSF57829">
    <property type="entry name" value="Zn-binding ribosomal proteins"/>
    <property type="match status" value="1"/>
</dbReference>
<dbReference type="PROSITE" id="PS01168">
    <property type="entry name" value="RIBOSOMAL_S27E"/>
    <property type="match status" value="1"/>
</dbReference>
<comment type="cofactor">
    <cofactor evidence="1">
        <name>Zn(2+)</name>
        <dbReference type="ChEBI" id="CHEBI:29105"/>
    </cofactor>
    <text evidence="1">Binds 1 zinc ion per subunit.</text>
</comment>
<comment type="subunit">
    <text evidence="1">Part of the 30S ribosomal subunit.</text>
</comment>
<comment type="similarity">
    <text evidence="1">Belongs to the eukaryotic ribosomal protein eS27 family.</text>
</comment>
<reference key="1">
    <citation type="journal article" date="2008" name="J. Bacteriol.">
        <title>The complete genome sequence of Thermococcus onnurineus NA1 reveals a mixed heterotrophic and carboxydotrophic metabolism.</title>
        <authorList>
            <person name="Lee H.S."/>
            <person name="Kang S.G."/>
            <person name="Bae S.S."/>
            <person name="Lim J.K."/>
            <person name="Cho Y."/>
            <person name="Kim Y.J."/>
            <person name="Jeon J.H."/>
            <person name="Cha S.-S."/>
            <person name="Kwon K.K."/>
            <person name="Kim H.-T."/>
            <person name="Park C.-J."/>
            <person name="Lee H.-W."/>
            <person name="Kim S.I."/>
            <person name="Chun J."/>
            <person name="Colwell R.R."/>
            <person name="Kim S.-J."/>
            <person name="Lee J.-H."/>
        </authorList>
    </citation>
    <scope>NUCLEOTIDE SEQUENCE [LARGE SCALE GENOMIC DNA]</scope>
    <source>
        <strain>NA1</strain>
    </source>
</reference>
<keyword id="KW-0479">Metal-binding</keyword>
<keyword id="KW-0687">Ribonucleoprotein</keyword>
<keyword id="KW-0689">Ribosomal protein</keyword>
<keyword id="KW-0862">Zinc</keyword>
<keyword id="KW-0863">Zinc-finger</keyword>